<organism>
    <name type="scientific">Burkholderia mallei (strain NCTC 10247)</name>
    <dbReference type="NCBI Taxonomy" id="320389"/>
    <lineage>
        <taxon>Bacteria</taxon>
        <taxon>Pseudomonadati</taxon>
        <taxon>Pseudomonadota</taxon>
        <taxon>Betaproteobacteria</taxon>
        <taxon>Burkholderiales</taxon>
        <taxon>Burkholderiaceae</taxon>
        <taxon>Burkholderia</taxon>
        <taxon>pseudomallei group</taxon>
    </lineage>
</organism>
<keyword id="KW-0687">Ribonucleoprotein</keyword>
<keyword id="KW-0689">Ribosomal protein</keyword>
<keyword id="KW-0694">RNA-binding</keyword>
<keyword id="KW-0699">rRNA-binding</keyword>
<sequence>MELKLLNSNGQEGAVVNASDVVFGRDYNEALIHQVVVAYQANARQGNRAQKDREQVKHTTKKPWRQKGTGRARAGMSSSPLWRGGGRIFPNSPDENFSHKVNKKMHRAGLCSIFSQLAREGRLSVVEDIVLEAPKTKLLADKFKAMGLDSVLVITDTVDENLYLASRNLPHVAVVEPRYADPLSLIYFKKVLVTKAAVAQIEELLS</sequence>
<name>RL4_BURM7</name>
<comment type="function">
    <text evidence="1">One of the primary rRNA binding proteins, this protein initially binds near the 5'-end of the 23S rRNA. It is important during the early stages of 50S assembly. It makes multiple contacts with different domains of the 23S rRNA in the assembled 50S subunit and ribosome.</text>
</comment>
<comment type="function">
    <text evidence="1">Forms part of the polypeptide exit tunnel.</text>
</comment>
<comment type="subunit">
    <text evidence="1">Part of the 50S ribosomal subunit.</text>
</comment>
<comment type="similarity">
    <text evidence="1">Belongs to the universal ribosomal protein uL4 family.</text>
</comment>
<protein>
    <recommendedName>
        <fullName evidence="1">Large ribosomal subunit protein uL4</fullName>
    </recommendedName>
    <alternativeName>
        <fullName evidence="3">50S ribosomal protein L4</fullName>
    </alternativeName>
</protein>
<evidence type="ECO:0000255" key="1">
    <source>
        <dbReference type="HAMAP-Rule" id="MF_01328"/>
    </source>
</evidence>
<evidence type="ECO:0000256" key="2">
    <source>
        <dbReference type="SAM" id="MobiDB-lite"/>
    </source>
</evidence>
<evidence type="ECO:0000305" key="3"/>
<accession>A3MRV5</accession>
<proteinExistence type="inferred from homology"/>
<gene>
    <name evidence="1" type="primary">rplD</name>
    <name type="ordered locus">BMA10247_3479</name>
</gene>
<feature type="chain" id="PRO_1000052367" description="Large ribosomal subunit protein uL4">
    <location>
        <begin position="1"/>
        <end position="206"/>
    </location>
</feature>
<feature type="region of interest" description="Disordered" evidence="2">
    <location>
        <begin position="45"/>
        <end position="85"/>
    </location>
</feature>
<feature type="compositionally biased region" description="Basic residues" evidence="2">
    <location>
        <begin position="58"/>
        <end position="70"/>
    </location>
</feature>
<dbReference type="EMBL" id="CP000548">
    <property type="protein sequence ID" value="ABO04742.1"/>
    <property type="molecule type" value="Genomic_DNA"/>
</dbReference>
<dbReference type="RefSeq" id="WP_004199276.1">
    <property type="nucleotide sequence ID" value="NZ_CP007802.1"/>
</dbReference>
<dbReference type="SMR" id="A3MRV5"/>
<dbReference type="GeneID" id="93061831"/>
<dbReference type="KEGG" id="bmaz:BM44_3040"/>
<dbReference type="KEGG" id="bmn:BMA10247_3479"/>
<dbReference type="PATRIC" id="fig|320389.8.peg.3412"/>
<dbReference type="GO" id="GO:1990904">
    <property type="term" value="C:ribonucleoprotein complex"/>
    <property type="evidence" value="ECO:0007669"/>
    <property type="project" value="UniProtKB-KW"/>
</dbReference>
<dbReference type="GO" id="GO:0005840">
    <property type="term" value="C:ribosome"/>
    <property type="evidence" value="ECO:0007669"/>
    <property type="project" value="UniProtKB-KW"/>
</dbReference>
<dbReference type="GO" id="GO:0019843">
    <property type="term" value="F:rRNA binding"/>
    <property type="evidence" value="ECO:0007669"/>
    <property type="project" value="UniProtKB-UniRule"/>
</dbReference>
<dbReference type="GO" id="GO:0003735">
    <property type="term" value="F:structural constituent of ribosome"/>
    <property type="evidence" value="ECO:0007669"/>
    <property type="project" value="InterPro"/>
</dbReference>
<dbReference type="GO" id="GO:0006412">
    <property type="term" value="P:translation"/>
    <property type="evidence" value="ECO:0007669"/>
    <property type="project" value="UniProtKB-UniRule"/>
</dbReference>
<dbReference type="Gene3D" id="3.40.1370.10">
    <property type="match status" value="1"/>
</dbReference>
<dbReference type="HAMAP" id="MF_01328_B">
    <property type="entry name" value="Ribosomal_uL4_B"/>
    <property type="match status" value="1"/>
</dbReference>
<dbReference type="InterPro" id="IPR002136">
    <property type="entry name" value="Ribosomal_uL4"/>
</dbReference>
<dbReference type="InterPro" id="IPR013005">
    <property type="entry name" value="Ribosomal_uL4-like"/>
</dbReference>
<dbReference type="InterPro" id="IPR023574">
    <property type="entry name" value="Ribosomal_uL4_dom_sf"/>
</dbReference>
<dbReference type="NCBIfam" id="TIGR03953">
    <property type="entry name" value="rplD_bact"/>
    <property type="match status" value="1"/>
</dbReference>
<dbReference type="PANTHER" id="PTHR10746">
    <property type="entry name" value="50S RIBOSOMAL PROTEIN L4"/>
    <property type="match status" value="1"/>
</dbReference>
<dbReference type="PANTHER" id="PTHR10746:SF6">
    <property type="entry name" value="LARGE RIBOSOMAL SUBUNIT PROTEIN UL4M"/>
    <property type="match status" value="1"/>
</dbReference>
<dbReference type="Pfam" id="PF00573">
    <property type="entry name" value="Ribosomal_L4"/>
    <property type="match status" value="1"/>
</dbReference>
<dbReference type="SUPFAM" id="SSF52166">
    <property type="entry name" value="Ribosomal protein L4"/>
    <property type="match status" value="1"/>
</dbReference>
<reference key="1">
    <citation type="journal article" date="2010" name="Genome Biol. Evol.">
        <title>Continuing evolution of Burkholderia mallei through genome reduction and large-scale rearrangements.</title>
        <authorList>
            <person name="Losada L."/>
            <person name="Ronning C.M."/>
            <person name="DeShazer D."/>
            <person name="Woods D."/>
            <person name="Fedorova N."/>
            <person name="Kim H.S."/>
            <person name="Shabalina S.A."/>
            <person name="Pearson T.R."/>
            <person name="Brinkac L."/>
            <person name="Tan P."/>
            <person name="Nandi T."/>
            <person name="Crabtree J."/>
            <person name="Badger J."/>
            <person name="Beckstrom-Sternberg S."/>
            <person name="Saqib M."/>
            <person name="Schutzer S.E."/>
            <person name="Keim P."/>
            <person name="Nierman W.C."/>
        </authorList>
    </citation>
    <scope>NUCLEOTIDE SEQUENCE [LARGE SCALE GENOMIC DNA]</scope>
    <source>
        <strain>NCTC 10247</strain>
    </source>
</reference>